<gene>
    <name evidence="1" type="primary">panD</name>
    <name type="ordered locus">SSON_0139</name>
</gene>
<organism>
    <name type="scientific">Shigella sonnei (strain Ss046)</name>
    <dbReference type="NCBI Taxonomy" id="300269"/>
    <lineage>
        <taxon>Bacteria</taxon>
        <taxon>Pseudomonadati</taxon>
        <taxon>Pseudomonadota</taxon>
        <taxon>Gammaproteobacteria</taxon>
        <taxon>Enterobacterales</taxon>
        <taxon>Enterobacteriaceae</taxon>
        <taxon>Shigella</taxon>
    </lineage>
</organism>
<accession>Q3Z5M9</accession>
<feature type="chain" id="PRO_0000236893" description="Aspartate 1-decarboxylase beta chain" evidence="1">
    <location>
        <begin position="1"/>
        <end position="24"/>
    </location>
</feature>
<feature type="chain" id="PRO_0000236894" description="Aspartate 1-decarboxylase alpha chain" evidence="1">
    <location>
        <begin position="25"/>
        <end position="126"/>
    </location>
</feature>
<feature type="active site" description="Schiff-base intermediate with substrate; via pyruvic acid" evidence="1">
    <location>
        <position position="25"/>
    </location>
</feature>
<feature type="active site" description="Proton donor" evidence="1">
    <location>
        <position position="58"/>
    </location>
</feature>
<feature type="binding site" evidence="1">
    <location>
        <position position="57"/>
    </location>
    <ligand>
        <name>substrate</name>
    </ligand>
</feature>
<feature type="binding site" evidence="1">
    <location>
        <begin position="73"/>
        <end position="75"/>
    </location>
    <ligand>
        <name>substrate</name>
    </ligand>
</feature>
<feature type="modified residue" description="Pyruvic acid (Ser)" evidence="1">
    <location>
        <position position="25"/>
    </location>
</feature>
<protein>
    <recommendedName>
        <fullName evidence="1">Aspartate 1-decarboxylase</fullName>
        <ecNumber evidence="1">4.1.1.11</ecNumber>
    </recommendedName>
    <alternativeName>
        <fullName evidence="1">Aspartate alpha-decarboxylase</fullName>
    </alternativeName>
    <component>
        <recommendedName>
            <fullName evidence="1">Aspartate 1-decarboxylase beta chain</fullName>
        </recommendedName>
    </component>
    <component>
        <recommendedName>
            <fullName evidence="1">Aspartate 1-decarboxylase alpha chain</fullName>
        </recommendedName>
    </component>
</protein>
<comment type="function">
    <text evidence="1">Catalyzes the pyruvoyl-dependent decarboxylation of aspartate to produce beta-alanine.</text>
</comment>
<comment type="catalytic activity">
    <reaction evidence="1">
        <text>L-aspartate + H(+) = beta-alanine + CO2</text>
        <dbReference type="Rhea" id="RHEA:19497"/>
        <dbReference type="ChEBI" id="CHEBI:15378"/>
        <dbReference type="ChEBI" id="CHEBI:16526"/>
        <dbReference type="ChEBI" id="CHEBI:29991"/>
        <dbReference type="ChEBI" id="CHEBI:57966"/>
        <dbReference type="EC" id="4.1.1.11"/>
    </reaction>
</comment>
<comment type="cofactor">
    <cofactor evidence="1">
        <name>pyruvate</name>
        <dbReference type="ChEBI" id="CHEBI:15361"/>
    </cofactor>
    <text evidence="1">Binds 1 pyruvoyl group covalently per subunit.</text>
</comment>
<comment type="pathway">
    <text evidence="1">Cofactor biosynthesis; (R)-pantothenate biosynthesis; beta-alanine from L-aspartate: step 1/1.</text>
</comment>
<comment type="subunit">
    <text evidence="1">Heterooctamer of four alpha and four beta subunits.</text>
</comment>
<comment type="subcellular location">
    <subcellularLocation>
        <location evidence="1">Cytoplasm</location>
    </subcellularLocation>
</comment>
<comment type="PTM">
    <text evidence="1">Is synthesized initially as an inactive proenzyme, which is activated by self-cleavage at a specific serine bond to produce a beta-subunit with a hydroxyl group at its C-terminus and an alpha-subunit with a pyruvoyl group at its N-terminus.</text>
</comment>
<comment type="similarity">
    <text evidence="1">Belongs to the PanD family.</text>
</comment>
<name>PAND_SHISS</name>
<dbReference type="EC" id="4.1.1.11" evidence="1"/>
<dbReference type="EMBL" id="CP000038">
    <property type="protein sequence ID" value="AAZ86933.1"/>
    <property type="molecule type" value="Genomic_DNA"/>
</dbReference>
<dbReference type="RefSeq" id="WP_000621515.1">
    <property type="nucleotide sequence ID" value="NC_007384.1"/>
</dbReference>
<dbReference type="SMR" id="Q3Z5M9"/>
<dbReference type="GeneID" id="93777305"/>
<dbReference type="KEGG" id="ssn:SSON_0139"/>
<dbReference type="HOGENOM" id="CLU_115305_2_1_6"/>
<dbReference type="UniPathway" id="UPA00028">
    <property type="reaction ID" value="UER00002"/>
</dbReference>
<dbReference type="Proteomes" id="UP000002529">
    <property type="component" value="Chromosome"/>
</dbReference>
<dbReference type="GO" id="GO:0005829">
    <property type="term" value="C:cytosol"/>
    <property type="evidence" value="ECO:0007669"/>
    <property type="project" value="TreeGrafter"/>
</dbReference>
<dbReference type="GO" id="GO:0004068">
    <property type="term" value="F:aspartate 1-decarboxylase activity"/>
    <property type="evidence" value="ECO:0007669"/>
    <property type="project" value="UniProtKB-UniRule"/>
</dbReference>
<dbReference type="GO" id="GO:0006523">
    <property type="term" value="P:alanine biosynthetic process"/>
    <property type="evidence" value="ECO:0007669"/>
    <property type="project" value="InterPro"/>
</dbReference>
<dbReference type="GO" id="GO:0015940">
    <property type="term" value="P:pantothenate biosynthetic process"/>
    <property type="evidence" value="ECO:0007669"/>
    <property type="project" value="UniProtKB-UniRule"/>
</dbReference>
<dbReference type="CDD" id="cd06919">
    <property type="entry name" value="Asp_decarbox"/>
    <property type="match status" value="1"/>
</dbReference>
<dbReference type="FunFam" id="2.40.40.20:FF:000004">
    <property type="entry name" value="Aspartate 1-decarboxylase"/>
    <property type="match status" value="1"/>
</dbReference>
<dbReference type="Gene3D" id="2.40.40.20">
    <property type="match status" value="1"/>
</dbReference>
<dbReference type="HAMAP" id="MF_00446">
    <property type="entry name" value="PanD"/>
    <property type="match status" value="1"/>
</dbReference>
<dbReference type="InterPro" id="IPR009010">
    <property type="entry name" value="Asp_de-COase-like_dom_sf"/>
</dbReference>
<dbReference type="InterPro" id="IPR003190">
    <property type="entry name" value="Asp_decarbox"/>
</dbReference>
<dbReference type="NCBIfam" id="TIGR00223">
    <property type="entry name" value="panD"/>
    <property type="match status" value="1"/>
</dbReference>
<dbReference type="PANTHER" id="PTHR21012">
    <property type="entry name" value="ASPARTATE 1-DECARBOXYLASE"/>
    <property type="match status" value="1"/>
</dbReference>
<dbReference type="PANTHER" id="PTHR21012:SF0">
    <property type="entry name" value="ASPARTATE 1-DECARBOXYLASE"/>
    <property type="match status" value="1"/>
</dbReference>
<dbReference type="Pfam" id="PF02261">
    <property type="entry name" value="Asp_decarbox"/>
    <property type="match status" value="1"/>
</dbReference>
<dbReference type="PIRSF" id="PIRSF006246">
    <property type="entry name" value="Asp_decarbox"/>
    <property type="match status" value="1"/>
</dbReference>
<dbReference type="SUPFAM" id="SSF50692">
    <property type="entry name" value="ADC-like"/>
    <property type="match status" value="1"/>
</dbReference>
<evidence type="ECO:0000255" key="1">
    <source>
        <dbReference type="HAMAP-Rule" id="MF_00446"/>
    </source>
</evidence>
<keyword id="KW-0068">Autocatalytic cleavage</keyword>
<keyword id="KW-0963">Cytoplasm</keyword>
<keyword id="KW-0210">Decarboxylase</keyword>
<keyword id="KW-0456">Lyase</keyword>
<keyword id="KW-0566">Pantothenate biosynthesis</keyword>
<keyword id="KW-0670">Pyruvate</keyword>
<keyword id="KW-1185">Reference proteome</keyword>
<keyword id="KW-0704">Schiff base</keyword>
<keyword id="KW-0865">Zymogen</keyword>
<proteinExistence type="inferred from homology"/>
<reference key="1">
    <citation type="journal article" date="2005" name="Nucleic Acids Res.">
        <title>Genome dynamics and diversity of Shigella species, the etiologic agents of bacillary dysentery.</title>
        <authorList>
            <person name="Yang F."/>
            <person name="Yang J."/>
            <person name="Zhang X."/>
            <person name="Chen L."/>
            <person name="Jiang Y."/>
            <person name="Yan Y."/>
            <person name="Tang X."/>
            <person name="Wang J."/>
            <person name="Xiong Z."/>
            <person name="Dong J."/>
            <person name="Xue Y."/>
            <person name="Zhu Y."/>
            <person name="Xu X."/>
            <person name="Sun L."/>
            <person name="Chen S."/>
            <person name="Nie H."/>
            <person name="Peng J."/>
            <person name="Xu J."/>
            <person name="Wang Y."/>
            <person name="Yuan Z."/>
            <person name="Wen Y."/>
            <person name="Yao Z."/>
            <person name="Shen Y."/>
            <person name="Qiang B."/>
            <person name="Hou Y."/>
            <person name="Yu J."/>
            <person name="Jin Q."/>
        </authorList>
    </citation>
    <scope>NUCLEOTIDE SEQUENCE [LARGE SCALE GENOMIC DNA]</scope>
    <source>
        <strain>Ss046</strain>
    </source>
</reference>
<sequence>MIRTMLQGKLHRVKVTHADLHYEGSCAIDQDFLDAAGILENEAIDIWNVTNGKRFSTYAIAAERGSRIISVNGAAAHCASVGDIVIIASFVTMPDEEARTWRPNVAYFEGDNEMKRTAKAIPVQVA</sequence>